<feature type="chain" id="PRO_1000099572" description="UvrABC system protein B">
    <location>
        <begin position="1"/>
        <end position="662"/>
    </location>
</feature>
<feature type="domain" description="Helicase ATP-binding" evidence="1">
    <location>
        <begin position="31"/>
        <end position="188"/>
    </location>
</feature>
<feature type="domain" description="Helicase C-terminal" evidence="1">
    <location>
        <begin position="435"/>
        <end position="601"/>
    </location>
</feature>
<feature type="domain" description="UVR" evidence="1">
    <location>
        <begin position="626"/>
        <end position="661"/>
    </location>
</feature>
<feature type="short sequence motif" description="Beta-hairpin">
    <location>
        <begin position="97"/>
        <end position="120"/>
    </location>
</feature>
<feature type="binding site" evidence="1">
    <location>
        <begin position="44"/>
        <end position="51"/>
    </location>
    <ligand>
        <name>ATP</name>
        <dbReference type="ChEBI" id="CHEBI:30616"/>
    </ligand>
</feature>
<name>UVRB_STRPS</name>
<comment type="function">
    <text evidence="1">The UvrABC repair system catalyzes the recognition and processing of DNA lesions. A damage recognition complex composed of 2 UvrA and 2 UvrB subunits scans DNA for abnormalities. Upon binding of the UvrA(2)B(2) complex to a putative damaged site, the DNA wraps around one UvrB monomer. DNA wrap is dependent on ATP binding by UvrB and probably causes local melting of the DNA helix, facilitating insertion of UvrB beta-hairpin between the DNA strands. Then UvrB probes one DNA strand for the presence of a lesion. If a lesion is found the UvrA subunits dissociate and the UvrB-DNA preincision complex is formed. This complex is subsequently bound by UvrC and the second UvrB is released. If no lesion is found, the DNA wraps around the other UvrB subunit that will check the other stand for damage.</text>
</comment>
<comment type="subunit">
    <text evidence="1">Forms a heterotetramer with UvrA during the search for lesions. Interacts with UvrC in an incision complex.</text>
</comment>
<comment type="subcellular location">
    <subcellularLocation>
        <location evidence="1">Cytoplasm</location>
    </subcellularLocation>
</comment>
<comment type="domain">
    <text evidence="1">The beta-hairpin motif is involved in DNA binding.</text>
</comment>
<comment type="similarity">
    <text evidence="1">Belongs to the UvrB family.</text>
</comment>
<proteinExistence type="inferred from homology"/>
<keyword id="KW-0067">ATP-binding</keyword>
<keyword id="KW-0963">Cytoplasm</keyword>
<keyword id="KW-0227">DNA damage</keyword>
<keyword id="KW-0228">DNA excision</keyword>
<keyword id="KW-0234">DNA repair</keyword>
<keyword id="KW-0267">Excision nuclease</keyword>
<keyword id="KW-0347">Helicase</keyword>
<keyword id="KW-0378">Hydrolase</keyword>
<keyword id="KW-0547">Nucleotide-binding</keyword>
<keyword id="KW-0742">SOS response</keyword>
<gene>
    <name evidence="1" type="primary">uvrB</name>
    <name type="ordered locus">SPCG_1064</name>
</gene>
<protein>
    <recommendedName>
        <fullName evidence="1">UvrABC system protein B</fullName>
        <shortName evidence="1">Protein UvrB</shortName>
    </recommendedName>
    <alternativeName>
        <fullName evidence="1">Excinuclease ABC subunit B</fullName>
    </alternativeName>
</protein>
<dbReference type="EMBL" id="CP001033">
    <property type="protein sequence ID" value="ACB90316.1"/>
    <property type="molecule type" value="Genomic_DNA"/>
</dbReference>
<dbReference type="RefSeq" id="WP_000607027.1">
    <property type="nucleotide sequence ID" value="NC_010582.1"/>
</dbReference>
<dbReference type="SMR" id="B2IPP4"/>
<dbReference type="KEGG" id="spw:SPCG_1064"/>
<dbReference type="HOGENOM" id="CLU_009621_2_1_9"/>
<dbReference type="GO" id="GO:0005737">
    <property type="term" value="C:cytoplasm"/>
    <property type="evidence" value="ECO:0007669"/>
    <property type="project" value="UniProtKB-SubCell"/>
</dbReference>
<dbReference type="GO" id="GO:0009380">
    <property type="term" value="C:excinuclease repair complex"/>
    <property type="evidence" value="ECO:0007669"/>
    <property type="project" value="InterPro"/>
</dbReference>
<dbReference type="GO" id="GO:0005524">
    <property type="term" value="F:ATP binding"/>
    <property type="evidence" value="ECO:0007669"/>
    <property type="project" value="UniProtKB-UniRule"/>
</dbReference>
<dbReference type="GO" id="GO:0016887">
    <property type="term" value="F:ATP hydrolysis activity"/>
    <property type="evidence" value="ECO:0007669"/>
    <property type="project" value="InterPro"/>
</dbReference>
<dbReference type="GO" id="GO:0003677">
    <property type="term" value="F:DNA binding"/>
    <property type="evidence" value="ECO:0007669"/>
    <property type="project" value="UniProtKB-UniRule"/>
</dbReference>
<dbReference type="GO" id="GO:0009381">
    <property type="term" value="F:excinuclease ABC activity"/>
    <property type="evidence" value="ECO:0007669"/>
    <property type="project" value="UniProtKB-UniRule"/>
</dbReference>
<dbReference type="GO" id="GO:0004386">
    <property type="term" value="F:helicase activity"/>
    <property type="evidence" value="ECO:0007669"/>
    <property type="project" value="UniProtKB-KW"/>
</dbReference>
<dbReference type="GO" id="GO:0006289">
    <property type="term" value="P:nucleotide-excision repair"/>
    <property type="evidence" value="ECO:0007669"/>
    <property type="project" value="UniProtKB-UniRule"/>
</dbReference>
<dbReference type="GO" id="GO:0009432">
    <property type="term" value="P:SOS response"/>
    <property type="evidence" value="ECO:0007669"/>
    <property type="project" value="UniProtKB-UniRule"/>
</dbReference>
<dbReference type="CDD" id="cd17916">
    <property type="entry name" value="DEXHc_UvrB"/>
    <property type="match status" value="1"/>
</dbReference>
<dbReference type="CDD" id="cd18790">
    <property type="entry name" value="SF2_C_UvrB"/>
    <property type="match status" value="1"/>
</dbReference>
<dbReference type="Gene3D" id="3.40.50.300">
    <property type="entry name" value="P-loop containing nucleotide triphosphate hydrolases"/>
    <property type="match status" value="3"/>
</dbReference>
<dbReference type="Gene3D" id="4.10.860.10">
    <property type="entry name" value="UVR domain"/>
    <property type="match status" value="1"/>
</dbReference>
<dbReference type="HAMAP" id="MF_00204">
    <property type="entry name" value="UvrB"/>
    <property type="match status" value="1"/>
</dbReference>
<dbReference type="InterPro" id="IPR006935">
    <property type="entry name" value="Helicase/UvrB_N"/>
</dbReference>
<dbReference type="InterPro" id="IPR014001">
    <property type="entry name" value="Helicase_ATP-bd"/>
</dbReference>
<dbReference type="InterPro" id="IPR001650">
    <property type="entry name" value="Helicase_C-like"/>
</dbReference>
<dbReference type="InterPro" id="IPR027417">
    <property type="entry name" value="P-loop_NTPase"/>
</dbReference>
<dbReference type="InterPro" id="IPR001943">
    <property type="entry name" value="UVR_dom"/>
</dbReference>
<dbReference type="InterPro" id="IPR036876">
    <property type="entry name" value="UVR_dom_sf"/>
</dbReference>
<dbReference type="InterPro" id="IPR004807">
    <property type="entry name" value="UvrB"/>
</dbReference>
<dbReference type="InterPro" id="IPR041471">
    <property type="entry name" value="UvrB_inter"/>
</dbReference>
<dbReference type="InterPro" id="IPR024759">
    <property type="entry name" value="UvrB_YAD/RRR_dom"/>
</dbReference>
<dbReference type="NCBIfam" id="NF003673">
    <property type="entry name" value="PRK05298.1"/>
    <property type="match status" value="1"/>
</dbReference>
<dbReference type="NCBIfam" id="TIGR00631">
    <property type="entry name" value="uvrb"/>
    <property type="match status" value="1"/>
</dbReference>
<dbReference type="PANTHER" id="PTHR24029">
    <property type="entry name" value="UVRABC SYSTEM PROTEIN B"/>
    <property type="match status" value="1"/>
</dbReference>
<dbReference type="PANTHER" id="PTHR24029:SF0">
    <property type="entry name" value="UVRABC SYSTEM PROTEIN B"/>
    <property type="match status" value="1"/>
</dbReference>
<dbReference type="Pfam" id="PF00271">
    <property type="entry name" value="Helicase_C"/>
    <property type="match status" value="1"/>
</dbReference>
<dbReference type="Pfam" id="PF04851">
    <property type="entry name" value="ResIII"/>
    <property type="match status" value="1"/>
</dbReference>
<dbReference type="Pfam" id="PF02151">
    <property type="entry name" value="UVR"/>
    <property type="match status" value="1"/>
</dbReference>
<dbReference type="Pfam" id="PF12344">
    <property type="entry name" value="UvrB"/>
    <property type="match status" value="1"/>
</dbReference>
<dbReference type="Pfam" id="PF17757">
    <property type="entry name" value="UvrB_inter"/>
    <property type="match status" value="1"/>
</dbReference>
<dbReference type="SMART" id="SM00487">
    <property type="entry name" value="DEXDc"/>
    <property type="match status" value="1"/>
</dbReference>
<dbReference type="SMART" id="SM00490">
    <property type="entry name" value="HELICc"/>
    <property type="match status" value="1"/>
</dbReference>
<dbReference type="SUPFAM" id="SSF46600">
    <property type="entry name" value="C-terminal UvrC-binding domain of UvrB"/>
    <property type="match status" value="1"/>
</dbReference>
<dbReference type="SUPFAM" id="SSF52540">
    <property type="entry name" value="P-loop containing nucleoside triphosphate hydrolases"/>
    <property type="match status" value="2"/>
</dbReference>
<dbReference type="PROSITE" id="PS51192">
    <property type="entry name" value="HELICASE_ATP_BIND_1"/>
    <property type="match status" value="1"/>
</dbReference>
<dbReference type="PROSITE" id="PS51194">
    <property type="entry name" value="HELICASE_CTER"/>
    <property type="match status" value="1"/>
</dbReference>
<dbReference type="PROSITE" id="PS50151">
    <property type="entry name" value="UVR"/>
    <property type="match status" value="1"/>
</dbReference>
<evidence type="ECO:0000255" key="1">
    <source>
        <dbReference type="HAMAP-Rule" id="MF_00204"/>
    </source>
</evidence>
<organism>
    <name type="scientific">Streptococcus pneumoniae (strain CGSP14)</name>
    <dbReference type="NCBI Taxonomy" id="516950"/>
    <lineage>
        <taxon>Bacteria</taxon>
        <taxon>Bacillati</taxon>
        <taxon>Bacillota</taxon>
        <taxon>Bacilli</taxon>
        <taxon>Lactobacillales</taxon>
        <taxon>Streptococcaceae</taxon>
        <taxon>Streptococcus</taxon>
    </lineage>
</organism>
<reference key="1">
    <citation type="journal article" date="2009" name="BMC Genomics">
        <title>Genome evolution driven by host adaptations results in a more virulent and antimicrobial-resistant Streptococcus pneumoniae serotype 14.</title>
        <authorList>
            <person name="Ding F."/>
            <person name="Tang P."/>
            <person name="Hsu M.-H."/>
            <person name="Cui P."/>
            <person name="Hu S."/>
            <person name="Yu J."/>
            <person name="Chiu C.-H."/>
        </authorList>
    </citation>
    <scope>NUCLEOTIDE SEQUENCE [LARGE SCALE GENOMIC DNA]</scope>
    <source>
        <strain>CGSP14</strain>
    </source>
</reference>
<accession>B2IPP4</accession>
<sequence>MINHITDNQFKLVSKYQPSGDQPQAIEQLVDNIEGGEKAQILMGATGTGKTYTMSQVISKVNKPTLVIAHNKTLAGQLYGEFKEFFPENAVEYFVSYYDYYQPEAYVPSSDTYIEKDSSVNDEIDKLRHSATSALLERNDVIVVASVSCIYGLGSPKEYADSVVSLRPGLEISRDKLLNDLVDIQFERNDIDFQRGRFRVRGDVVEIFPASRDEHAFRVEFFGDEIDRIREVEALTGQVLGEVDHLAIFPATHFVTNDDHMEVAIAKIQAELEEQLAVFEKEGKLLEAQRLKQRTEYDIEMLREMGYTNGVENYSRHMDGRSEGEPPYTLLDFFPDDFLIMIDESHMTIGQIKGMYNGDRSRKEMLVNYGFRLPSALDNRPLRREEFESHVHQIVYVSATPGDYENEQTETVIEQIIRPTGLLDPEVEVRPTMGQIDDLLGEINARVEKNERTFITTLTKKMAEDLTDYFKEMGIKVKYMHSDIKTLERTEIIRDLRLGVFDVLVGINLLREGIDVPEVSLVAILDADKEGFLRNERGLIQTIGRAARNSEGHVIMYADTVTQSMQRAIDETARRRKIQMAYNEEHGIVPQTIKKEIRDLIAVTKAVAKEEDKEVDINSLNKQERKELVKKLEKQMQEAVEVLDFELAAQIRDMMLEVKALD</sequence>